<accession>A6KYI5</accession>
<dbReference type="EMBL" id="CP000139">
    <property type="protein sequence ID" value="ABR38499.1"/>
    <property type="molecule type" value="Genomic_DNA"/>
</dbReference>
<dbReference type="RefSeq" id="WP_005844866.1">
    <property type="nucleotide sequence ID" value="NZ_JANSWM010000035.1"/>
</dbReference>
<dbReference type="SMR" id="A6KYI5"/>
<dbReference type="STRING" id="435590.BVU_0795"/>
<dbReference type="PaxDb" id="435590-BVU_0795"/>
<dbReference type="GeneID" id="93449013"/>
<dbReference type="KEGG" id="bvu:BVU_0795"/>
<dbReference type="eggNOG" id="COG0093">
    <property type="taxonomic scope" value="Bacteria"/>
</dbReference>
<dbReference type="HOGENOM" id="CLU_095071_2_1_10"/>
<dbReference type="BioCyc" id="BVUL435590:G1G59-837-MONOMER"/>
<dbReference type="Proteomes" id="UP000002861">
    <property type="component" value="Chromosome"/>
</dbReference>
<dbReference type="GO" id="GO:0022625">
    <property type="term" value="C:cytosolic large ribosomal subunit"/>
    <property type="evidence" value="ECO:0007669"/>
    <property type="project" value="TreeGrafter"/>
</dbReference>
<dbReference type="GO" id="GO:0070180">
    <property type="term" value="F:large ribosomal subunit rRNA binding"/>
    <property type="evidence" value="ECO:0007669"/>
    <property type="project" value="TreeGrafter"/>
</dbReference>
<dbReference type="GO" id="GO:0003735">
    <property type="term" value="F:structural constituent of ribosome"/>
    <property type="evidence" value="ECO:0007669"/>
    <property type="project" value="InterPro"/>
</dbReference>
<dbReference type="GO" id="GO:0006412">
    <property type="term" value="P:translation"/>
    <property type="evidence" value="ECO:0007669"/>
    <property type="project" value="UniProtKB-UniRule"/>
</dbReference>
<dbReference type="CDD" id="cd00337">
    <property type="entry name" value="Ribosomal_uL14"/>
    <property type="match status" value="1"/>
</dbReference>
<dbReference type="FunFam" id="2.40.150.20:FF:000001">
    <property type="entry name" value="50S ribosomal protein L14"/>
    <property type="match status" value="1"/>
</dbReference>
<dbReference type="Gene3D" id="2.40.150.20">
    <property type="entry name" value="Ribosomal protein L14"/>
    <property type="match status" value="1"/>
</dbReference>
<dbReference type="HAMAP" id="MF_01367">
    <property type="entry name" value="Ribosomal_uL14"/>
    <property type="match status" value="1"/>
</dbReference>
<dbReference type="InterPro" id="IPR000218">
    <property type="entry name" value="Ribosomal_uL14"/>
</dbReference>
<dbReference type="InterPro" id="IPR005745">
    <property type="entry name" value="Ribosomal_uL14_bac-type"/>
</dbReference>
<dbReference type="InterPro" id="IPR019972">
    <property type="entry name" value="Ribosomal_uL14_CS"/>
</dbReference>
<dbReference type="InterPro" id="IPR036853">
    <property type="entry name" value="Ribosomal_uL14_sf"/>
</dbReference>
<dbReference type="NCBIfam" id="TIGR01067">
    <property type="entry name" value="rplN_bact"/>
    <property type="match status" value="1"/>
</dbReference>
<dbReference type="PANTHER" id="PTHR11761">
    <property type="entry name" value="50S/60S RIBOSOMAL PROTEIN L14/L23"/>
    <property type="match status" value="1"/>
</dbReference>
<dbReference type="PANTHER" id="PTHR11761:SF3">
    <property type="entry name" value="LARGE RIBOSOMAL SUBUNIT PROTEIN UL14M"/>
    <property type="match status" value="1"/>
</dbReference>
<dbReference type="Pfam" id="PF00238">
    <property type="entry name" value="Ribosomal_L14"/>
    <property type="match status" value="1"/>
</dbReference>
<dbReference type="SMART" id="SM01374">
    <property type="entry name" value="Ribosomal_L14"/>
    <property type="match status" value="1"/>
</dbReference>
<dbReference type="SUPFAM" id="SSF50193">
    <property type="entry name" value="Ribosomal protein L14"/>
    <property type="match status" value="1"/>
</dbReference>
<dbReference type="PROSITE" id="PS00049">
    <property type="entry name" value="RIBOSOMAL_L14"/>
    <property type="match status" value="1"/>
</dbReference>
<feature type="chain" id="PRO_1000055520" description="Large ribosomal subunit protein uL14">
    <location>
        <begin position="1"/>
        <end position="121"/>
    </location>
</feature>
<evidence type="ECO:0000255" key="1">
    <source>
        <dbReference type="HAMAP-Rule" id="MF_01367"/>
    </source>
</evidence>
<evidence type="ECO:0000305" key="2"/>
<protein>
    <recommendedName>
        <fullName evidence="1">Large ribosomal subunit protein uL14</fullName>
    </recommendedName>
    <alternativeName>
        <fullName evidence="2">50S ribosomal protein L14</fullName>
    </alternativeName>
</protein>
<organism>
    <name type="scientific">Phocaeicola vulgatus (strain ATCC 8482 / DSM 1447 / JCM 5826 / CCUG 4940 / NBRC 14291 / NCTC 11154)</name>
    <name type="common">Bacteroides vulgatus</name>
    <dbReference type="NCBI Taxonomy" id="435590"/>
    <lineage>
        <taxon>Bacteria</taxon>
        <taxon>Pseudomonadati</taxon>
        <taxon>Bacteroidota</taxon>
        <taxon>Bacteroidia</taxon>
        <taxon>Bacteroidales</taxon>
        <taxon>Bacteroidaceae</taxon>
        <taxon>Phocaeicola</taxon>
    </lineage>
</organism>
<keyword id="KW-0687">Ribonucleoprotein</keyword>
<keyword id="KW-0689">Ribosomal protein</keyword>
<keyword id="KW-0694">RNA-binding</keyword>
<keyword id="KW-0699">rRNA-binding</keyword>
<gene>
    <name evidence="1" type="primary">rplN</name>
    <name type="ordered locus">BVU_0795</name>
</gene>
<name>RL14_PHOV8</name>
<sequence length="121" mass="13057">MIQVESRLTVCDNSGAKEALCIRVLGGTKRRYASVGDVIVVSIKSVIPSSDVKKGAVSKALIVRTKKEIRRADGSYIRFDDNACVLLNNAGEIRGSRIFGPVARELRAANMKVVSLAPEVL</sequence>
<reference key="1">
    <citation type="journal article" date="2007" name="PLoS Biol.">
        <title>Evolution of symbiotic bacteria in the distal human intestine.</title>
        <authorList>
            <person name="Xu J."/>
            <person name="Mahowald M.A."/>
            <person name="Ley R.E."/>
            <person name="Lozupone C.A."/>
            <person name="Hamady M."/>
            <person name="Martens E.C."/>
            <person name="Henrissat B."/>
            <person name="Coutinho P.M."/>
            <person name="Minx P."/>
            <person name="Latreille P."/>
            <person name="Cordum H."/>
            <person name="Van Brunt A."/>
            <person name="Kim K."/>
            <person name="Fulton R.S."/>
            <person name="Fulton L.A."/>
            <person name="Clifton S.W."/>
            <person name="Wilson R.K."/>
            <person name="Knight R.D."/>
            <person name="Gordon J.I."/>
        </authorList>
    </citation>
    <scope>NUCLEOTIDE SEQUENCE [LARGE SCALE GENOMIC DNA]</scope>
    <source>
        <strain>ATCC 8482 / DSM 1447 / JCM 5826 / CCUG 4940 / NBRC 14291 / NCTC 11154</strain>
    </source>
</reference>
<proteinExistence type="inferred from homology"/>
<comment type="function">
    <text evidence="1">Binds to 23S rRNA. Forms part of two intersubunit bridges in the 70S ribosome.</text>
</comment>
<comment type="subunit">
    <text evidence="1">Part of the 50S ribosomal subunit. Forms a cluster with proteins L3 and L19. In the 70S ribosome, L14 and L19 interact and together make contacts with the 16S rRNA in bridges B5 and B8.</text>
</comment>
<comment type="similarity">
    <text evidence="1">Belongs to the universal ribosomal protein uL14 family.</text>
</comment>